<gene>
    <name type="ordered locus">Teth39_1054</name>
</gene>
<dbReference type="EC" id="3.1.-.-" evidence="1"/>
<dbReference type="EMBL" id="CP000924">
    <property type="protein sequence ID" value="ABY94709.1"/>
    <property type="molecule type" value="Genomic_DNA"/>
</dbReference>
<dbReference type="SMR" id="B0K996"/>
<dbReference type="STRING" id="340099.Teth39_1054"/>
<dbReference type="KEGG" id="tpd:Teth39_1054"/>
<dbReference type="eggNOG" id="COG0816">
    <property type="taxonomic scope" value="Bacteria"/>
</dbReference>
<dbReference type="HOGENOM" id="CLU_098240_2_0_9"/>
<dbReference type="Proteomes" id="UP000002156">
    <property type="component" value="Chromosome"/>
</dbReference>
<dbReference type="GO" id="GO:0005829">
    <property type="term" value="C:cytosol"/>
    <property type="evidence" value="ECO:0007669"/>
    <property type="project" value="TreeGrafter"/>
</dbReference>
<dbReference type="GO" id="GO:0004518">
    <property type="term" value="F:nuclease activity"/>
    <property type="evidence" value="ECO:0007669"/>
    <property type="project" value="UniProtKB-KW"/>
</dbReference>
<dbReference type="GO" id="GO:0000967">
    <property type="term" value="P:rRNA 5'-end processing"/>
    <property type="evidence" value="ECO:0007669"/>
    <property type="project" value="UniProtKB-UniRule"/>
</dbReference>
<dbReference type="CDD" id="cd16964">
    <property type="entry name" value="YqgF"/>
    <property type="match status" value="1"/>
</dbReference>
<dbReference type="Gene3D" id="3.30.420.140">
    <property type="entry name" value="YqgF/RNase H-like domain"/>
    <property type="match status" value="1"/>
</dbReference>
<dbReference type="HAMAP" id="MF_00651">
    <property type="entry name" value="Nuclease_YqgF"/>
    <property type="match status" value="1"/>
</dbReference>
<dbReference type="InterPro" id="IPR012337">
    <property type="entry name" value="RNaseH-like_sf"/>
</dbReference>
<dbReference type="InterPro" id="IPR005227">
    <property type="entry name" value="YqgF"/>
</dbReference>
<dbReference type="InterPro" id="IPR006641">
    <property type="entry name" value="YqgF/RNaseH-like_dom"/>
</dbReference>
<dbReference type="InterPro" id="IPR037027">
    <property type="entry name" value="YqgF/RNaseH-like_dom_sf"/>
</dbReference>
<dbReference type="NCBIfam" id="TIGR00250">
    <property type="entry name" value="RNAse_H_YqgF"/>
    <property type="match status" value="1"/>
</dbReference>
<dbReference type="PANTHER" id="PTHR33317">
    <property type="entry name" value="POLYNUCLEOTIDYL TRANSFERASE, RIBONUCLEASE H-LIKE SUPERFAMILY PROTEIN"/>
    <property type="match status" value="1"/>
</dbReference>
<dbReference type="PANTHER" id="PTHR33317:SF4">
    <property type="entry name" value="POLYNUCLEOTIDYL TRANSFERASE, RIBONUCLEASE H-LIKE SUPERFAMILY PROTEIN"/>
    <property type="match status" value="1"/>
</dbReference>
<dbReference type="Pfam" id="PF03652">
    <property type="entry name" value="RuvX"/>
    <property type="match status" value="1"/>
</dbReference>
<dbReference type="SMART" id="SM00732">
    <property type="entry name" value="YqgFc"/>
    <property type="match status" value="1"/>
</dbReference>
<dbReference type="SUPFAM" id="SSF53098">
    <property type="entry name" value="Ribonuclease H-like"/>
    <property type="match status" value="1"/>
</dbReference>
<feature type="chain" id="PRO_1000131081" description="Putative pre-16S rRNA nuclease">
    <location>
        <begin position="1"/>
        <end position="139"/>
    </location>
</feature>
<evidence type="ECO:0000255" key="1">
    <source>
        <dbReference type="HAMAP-Rule" id="MF_00651"/>
    </source>
</evidence>
<sequence length="139" mass="15607">MRIMGLDVGDKTIGVAISDLSGTIAQGLTTIKRSSNKKDFERIKQIINEYEVGMIIVGLPKNMNGTLGPQGQKVMRFVEHLKEAFSIPIILWDERLTTVEAQRVLIEKADISRAKRKEVIDKLAAVLILQNYLDSQKNK</sequence>
<reference key="1">
    <citation type="submission" date="2008-01" db="EMBL/GenBank/DDBJ databases">
        <title>Complete sequence of Thermoanaerobacter pseudethanolicus 39E.</title>
        <authorList>
            <person name="Copeland A."/>
            <person name="Lucas S."/>
            <person name="Lapidus A."/>
            <person name="Barry K."/>
            <person name="Glavina del Rio T."/>
            <person name="Dalin E."/>
            <person name="Tice H."/>
            <person name="Pitluck S."/>
            <person name="Bruce D."/>
            <person name="Goodwin L."/>
            <person name="Saunders E."/>
            <person name="Brettin T."/>
            <person name="Detter J.C."/>
            <person name="Han C."/>
            <person name="Schmutz J."/>
            <person name="Larimer F."/>
            <person name="Land M."/>
            <person name="Hauser L."/>
            <person name="Kyrpides N."/>
            <person name="Lykidis A."/>
            <person name="Hemme C."/>
            <person name="Fields M.W."/>
            <person name="He Z."/>
            <person name="Zhou J."/>
            <person name="Richardson P."/>
        </authorList>
    </citation>
    <scope>NUCLEOTIDE SEQUENCE [LARGE SCALE GENOMIC DNA]</scope>
    <source>
        <strain>ATCC 33223 / DSM 2355 / 39E</strain>
    </source>
</reference>
<comment type="function">
    <text evidence="1">Could be a nuclease involved in processing of the 5'-end of pre-16S rRNA.</text>
</comment>
<comment type="subcellular location">
    <subcellularLocation>
        <location evidence="1">Cytoplasm</location>
    </subcellularLocation>
</comment>
<comment type="similarity">
    <text evidence="1">Belongs to the YqgF nuclease family.</text>
</comment>
<protein>
    <recommendedName>
        <fullName evidence="1">Putative pre-16S rRNA nuclease</fullName>
        <ecNumber evidence="1">3.1.-.-</ecNumber>
    </recommendedName>
</protein>
<accession>B0K996</accession>
<proteinExistence type="inferred from homology"/>
<organism>
    <name type="scientific">Thermoanaerobacter pseudethanolicus (strain ATCC 33223 / 39E)</name>
    <name type="common">Clostridium thermohydrosulfuricum</name>
    <dbReference type="NCBI Taxonomy" id="340099"/>
    <lineage>
        <taxon>Bacteria</taxon>
        <taxon>Bacillati</taxon>
        <taxon>Bacillota</taxon>
        <taxon>Clostridia</taxon>
        <taxon>Thermoanaerobacterales</taxon>
        <taxon>Thermoanaerobacteraceae</taxon>
        <taxon>Thermoanaerobacter</taxon>
    </lineage>
</organism>
<name>YQGF_THEP3</name>
<keyword id="KW-0963">Cytoplasm</keyword>
<keyword id="KW-0378">Hydrolase</keyword>
<keyword id="KW-0540">Nuclease</keyword>
<keyword id="KW-1185">Reference proteome</keyword>
<keyword id="KW-0690">Ribosome biogenesis</keyword>